<keyword id="KW-0349">Heme</keyword>
<keyword id="KW-0408">Iron</keyword>
<keyword id="KW-0479">Metal-binding</keyword>
<keyword id="KW-0561">Oxygen transport</keyword>
<keyword id="KW-0597">Phosphoprotein</keyword>
<keyword id="KW-0813">Transport</keyword>
<feature type="chain" id="PRO_0000053185" description="Hemoglobin subunit epsilon">
    <location>
        <begin position="1"/>
        <end position="147"/>
    </location>
</feature>
<feature type="domain" description="Globin" evidence="2">
    <location>
        <begin position="3"/>
        <end position="147"/>
    </location>
</feature>
<feature type="binding site" description="distal binding residue" evidence="2">
    <location>
        <position position="64"/>
    </location>
    <ligand>
        <name>heme b</name>
        <dbReference type="ChEBI" id="CHEBI:60344"/>
    </ligand>
    <ligandPart>
        <name>Fe</name>
        <dbReference type="ChEBI" id="CHEBI:18248"/>
    </ligandPart>
</feature>
<feature type="binding site" description="proximal binding residue" evidence="2">
    <location>
        <position position="93"/>
    </location>
    <ligand>
        <name>heme b</name>
        <dbReference type="ChEBI" id="CHEBI:60344"/>
    </ligand>
    <ligandPart>
        <name>Fe</name>
        <dbReference type="ChEBI" id="CHEBI:18248"/>
    </ligandPart>
</feature>
<feature type="modified residue" description="Phosphoserine" evidence="1">
    <location>
        <position position="14"/>
    </location>
</feature>
<feature type="modified residue" description="Phosphoserine" evidence="1">
    <location>
        <position position="51"/>
    </location>
</feature>
<protein>
    <recommendedName>
        <fullName>Hemoglobin subunit epsilon</fullName>
    </recommendedName>
    <alternativeName>
        <fullName>Epsilon-globin</fullName>
    </alternativeName>
    <alternativeName>
        <fullName>Hemoglobin epsilon chain</fullName>
    </alternativeName>
</protein>
<evidence type="ECO:0000250" key="1">
    <source>
        <dbReference type="UniProtKB" id="P02100"/>
    </source>
</evidence>
<evidence type="ECO:0000255" key="2">
    <source>
        <dbReference type="PROSITE-ProRule" id="PRU00238"/>
    </source>
</evidence>
<name>HBE_ALOSE</name>
<reference key="1">
    <citation type="journal article" date="1993" name="Mol. Phylogenet. Evol.">
        <title>Molecular phylogeny of the New World monkeys (Platyrrhini, primates).</title>
        <authorList>
            <person name="Schneider H."/>
            <person name="Schneider M.P.C."/>
            <person name="Sampaio I."/>
            <person name="Harada M.L."/>
            <person name="Stanhope M.J."/>
            <person name="Czekysbuaj J."/>
            <person name="Goodman M."/>
        </authorList>
    </citation>
    <scope>NUCLEOTIDE SEQUENCE [GENOMIC DNA]</scope>
    <source>
        <tissue>Lymphocyte</tissue>
    </source>
</reference>
<comment type="function">
    <text>The epsilon chain is a beta-type chain of early mammalian embryonic hemoglobin.</text>
</comment>
<comment type="subunit">
    <text>Heterotetramer of two alpha chains and two epsilon chains in early embryonic hemoglobin Gower-2; two zeta chains and two epsilon chains in early embryonic hemoglobin Gower-1.</text>
</comment>
<comment type="tissue specificity">
    <text>Red blood cells.</text>
</comment>
<comment type="similarity">
    <text evidence="2">Belongs to the globin family.</text>
</comment>
<dbReference type="EMBL" id="L25367">
    <property type="protein sequence ID" value="AAA35370.1"/>
    <property type="molecule type" value="Genomic_DNA"/>
</dbReference>
<dbReference type="SMR" id="P68018"/>
<dbReference type="GO" id="GO:0072562">
    <property type="term" value="C:blood microparticle"/>
    <property type="evidence" value="ECO:0007669"/>
    <property type="project" value="TreeGrafter"/>
</dbReference>
<dbReference type="GO" id="GO:0031838">
    <property type="term" value="C:haptoglobin-hemoglobin complex"/>
    <property type="evidence" value="ECO:0007669"/>
    <property type="project" value="TreeGrafter"/>
</dbReference>
<dbReference type="GO" id="GO:0005833">
    <property type="term" value="C:hemoglobin complex"/>
    <property type="evidence" value="ECO:0007669"/>
    <property type="project" value="InterPro"/>
</dbReference>
<dbReference type="GO" id="GO:0031720">
    <property type="term" value="F:haptoglobin binding"/>
    <property type="evidence" value="ECO:0007669"/>
    <property type="project" value="TreeGrafter"/>
</dbReference>
<dbReference type="GO" id="GO:0020037">
    <property type="term" value="F:heme binding"/>
    <property type="evidence" value="ECO:0007669"/>
    <property type="project" value="InterPro"/>
</dbReference>
<dbReference type="GO" id="GO:0031721">
    <property type="term" value="F:hemoglobin alpha binding"/>
    <property type="evidence" value="ECO:0007669"/>
    <property type="project" value="TreeGrafter"/>
</dbReference>
<dbReference type="GO" id="GO:0046872">
    <property type="term" value="F:metal ion binding"/>
    <property type="evidence" value="ECO:0007669"/>
    <property type="project" value="UniProtKB-KW"/>
</dbReference>
<dbReference type="GO" id="GO:0043177">
    <property type="term" value="F:organic acid binding"/>
    <property type="evidence" value="ECO:0007669"/>
    <property type="project" value="TreeGrafter"/>
</dbReference>
<dbReference type="GO" id="GO:0019825">
    <property type="term" value="F:oxygen binding"/>
    <property type="evidence" value="ECO:0007669"/>
    <property type="project" value="InterPro"/>
</dbReference>
<dbReference type="GO" id="GO:0005344">
    <property type="term" value="F:oxygen carrier activity"/>
    <property type="evidence" value="ECO:0007669"/>
    <property type="project" value="UniProtKB-KW"/>
</dbReference>
<dbReference type="GO" id="GO:0004601">
    <property type="term" value="F:peroxidase activity"/>
    <property type="evidence" value="ECO:0007669"/>
    <property type="project" value="TreeGrafter"/>
</dbReference>
<dbReference type="GO" id="GO:0042744">
    <property type="term" value="P:hydrogen peroxide catabolic process"/>
    <property type="evidence" value="ECO:0007669"/>
    <property type="project" value="TreeGrafter"/>
</dbReference>
<dbReference type="CDD" id="cd08925">
    <property type="entry name" value="Hb-beta-like"/>
    <property type="match status" value="1"/>
</dbReference>
<dbReference type="FunFam" id="1.10.490.10:FF:000001">
    <property type="entry name" value="Hemoglobin subunit beta"/>
    <property type="match status" value="1"/>
</dbReference>
<dbReference type="Gene3D" id="1.10.490.10">
    <property type="entry name" value="Globins"/>
    <property type="match status" value="1"/>
</dbReference>
<dbReference type="InterPro" id="IPR000971">
    <property type="entry name" value="Globin"/>
</dbReference>
<dbReference type="InterPro" id="IPR009050">
    <property type="entry name" value="Globin-like_sf"/>
</dbReference>
<dbReference type="InterPro" id="IPR012292">
    <property type="entry name" value="Globin/Proto"/>
</dbReference>
<dbReference type="InterPro" id="IPR002337">
    <property type="entry name" value="Hemoglobin_b"/>
</dbReference>
<dbReference type="InterPro" id="IPR050056">
    <property type="entry name" value="Hemoglobin_oxygen_transport"/>
</dbReference>
<dbReference type="PANTHER" id="PTHR11442">
    <property type="entry name" value="HEMOGLOBIN FAMILY MEMBER"/>
    <property type="match status" value="1"/>
</dbReference>
<dbReference type="PANTHER" id="PTHR11442:SF7">
    <property type="entry name" value="HEMOGLOBIN SUBUNIT EPSILON"/>
    <property type="match status" value="1"/>
</dbReference>
<dbReference type="Pfam" id="PF00042">
    <property type="entry name" value="Globin"/>
    <property type="match status" value="1"/>
</dbReference>
<dbReference type="PRINTS" id="PR00814">
    <property type="entry name" value="BETAHAEM"/>
</dbReference>
<dbReference type="SUPFAM" id="SSF46458">
    <property type="entry name" value="Globin-like"/>
    <property type="match status" value="1"/>
</dbReference>
<dbReference type="PROSITE" id="PS01033">
    <property type="entry name" value="GLOBIN"/>
    <property type="match status" value="1"/>
</dbReference>
<proteinExistence type="evidence at transcript level"/>
<sequence length="147" mass="16262">MVHFTAEEKAAITSLWGKMNVEEAGGEALGRLLVVYPWTQRFFDNFGNLSSPSAILGNPKVKAHGKKVLTSFGDAIKNMDNLKTTFAKLSELHCDKLHVDPENFRLLGNVMVIILATHFGKEFTPEVQAAWQKLVSAVAIALGHKYH</sequence>
<gene>
    <name type="primary">HBE1</name>
</gene>
<accession>P68018</accession>
<accession>P43350</accession>
<organism>
    <name type="scientific">Alouatta seniculus</name>
    <name type="common">Red howler monkey</name>
    <dbReference type="NCBI Taxonomy" id="9503"/>
    <lineage>
        <taxon>Eukaryota</taxon>
        <taxon>Metazoa</taxon>
        <taxon>Chordata</taxon>
        <taxon>Craniata</taxon>
        <taxon>Vertebrata</taxon>
        <taxon>Euteleostomi</taxon>
        <taxon>Mammalia</taxon>
        <taxon>Eutheria</taxon>
        <taxon>Euarchontoglires</taxon>
        <taxon>Primates</taxon>
        <taxon>Haplorrhini</taxon>
        <taxon>Platyrrhini</taxon>
        <taxon>Atelidae</taxon>
        <taxon>Alouattinae</taxon>
        <taxon>Alouatta</taxon>
    </lineage>
</organism>